<accession>P03728</accession>
<organism>
    <name type="scientific">Escherichia phage T7</name>
    <name type="common">Bacteriophage T7</name>
    <dbReference type="NCBI Taxonomy" id="10760"/>
    <lineage>
        <taxon>Viruses</taxon>
        <taxon>Duplodnaviria</taxon>
        <taxon>Heunggongvirae</taxon>
        <taxon>Uroviricota</taxon>
        <taxon>Caudoviricetes</taxon>
        <taxon>Autographiviridae</taxon>
        <taxon>Studiervirinae</taxon>
        <taxon>Teseptimavirus</taxon>
        <taxon>Teseptimavirus T7</taxon>
    </lineage>
</organism>
<reference key="1">
    <citation type="journal article" date="1983" name="J. Mol. Biol.">
        <title>Complete nucleotide sequence of bacteriophage T7 DNA and the locations of T7 genetic elements.</title>
        <authorList>
            <person name="Dunn J.J."/>
            <person name="Studier F.W."/>
        </authorList>
    </citation>
    <scope>NUCLEOTIDE SEQUENCE [LARGE SCALE GENOMIC DNA]</scope>
</reference>
<reference key="2">
    <citation type="journal article" date="2005" name="J. Mol. Biol.">
        <title>Structure of the connector of bacteriophage T7 at 8A resolution: structural homologies of a basic component of a DNA translocating machinery.</title>
        <authorList>
            <person name="Agirrezabala X."/>
            <person name="Martin-Benito J."/>
            <person name="Valle M."/>
            <person name="Gonzalez J.M."/>
            <person name="Valencia A."/>
            <person name="Valpuesta J.M."/>
            <person name="Carrascosa J.L."/>
        </authorList>
    </citation>
    <scope>FUNCTION</scope>
    <scope>INTERACTION WITH THE TAIL TUBE PROTEIN GP11</scope>
    <scope>SUBUNIT</scope>
</reference>
<reference key="3">
    <citation type="journal article" date="2013" name="J. Biol. Chem.">
        <title>Large terminase conformational change induced by connector binding in bacteriophage T7.</title>
        <authorList>
            <person name="Dauden M.I."/>
            <person name="Martin-Benito J."/>
            <person name="Sanchez-Ferrero J.C."/>
            <person name="Pulido-Cid M."/>
            <person name="Valpuesta J.M."/>
            <person name="Carrascosa J.L."/>
        </authorList>
    </citation>
    <scope>INTERACTION WITH THE TERMINASE LARGE SUBUNIT</scope>
</reference>
<reference key="4">
    <citation type="journal article" date="2013" name="Proc. Natl. Acad. Sci. U.S.A.">
        <title>Visualization of uncorrelated, tandem symmetry mismatches in the internal genome packaging apparatus of bacteriophage T7.</title>
        <authorList>
            <person name="Guo F."/>
            <person name="Liu Z."/>
            <person name="Vago F."/>
            <person name="Ren Y."/>
            <person name="Wu W."/>
            <person name="Wright E.T."/>
            <person name="Serwer P."/>
            <person name="Jiang W."/>
        </authorList>
    </citation>
    <scope>INTERACTION WITH THE MAJOR CAPSID PROTEIN</scope>
    <scope>INTERACTION WITH INTERNAL VIRION PROTEIN GP14</scope>
</reference>
<reference key="5">
    <citation type="journal article" date="2013" name="J. Biol. Chem.">
        <title>Structural characterization of the bacteriophage T7 tail machinery.</title>
        <authorList>
            <person name="Cuervo A."/>
            <person name="Pulido-Cid M."/>
            <person name="Chagoyen M."/>
            <person name="Arranz R."/>
            <person name="Gonzalez-Garcia V.A."/>
            <person name="Garcia-Doval C."/>
            <person name="Caston J.R."/>
            <person name="Valpuesta J.M."/>
            <person name="van Raaij M.J."/>
            <person name="Martin-Benito J."/>
            <person name="Carrascosa J.L."/>
        </authorList>
    </citation>
    <scope>STRUCTURE BY ELECTRON MICROSCOPY (12.0 ANGSTROMS) OF 1-497</scope>
    <scope>FUNCTION</scope>
    <scope>SUBUNIT</scope>
    <scope>SUBCELLULAR LOCATION</scope>
</reference>
<keyword id="KW-0002">3D-structure</keyword>
<keyword id="KW-0167">Capsid protein</keyword>
<keyword id="KW-1185">Reference proteome</keyword>
<keyword id="KW-0118">Viral capsid assembly</keyword>
<keyword id="KW-1171">Viral genome ejection through host cell envelope</keyword>
<keyword id="KW-0231">Viral genome packaging</keyword>
<keyword id="KW-1162">Viral penetration into host cytoplasm</keyword>
<keyword id="KW-1188">Viral release from host cell</keyword>
<keyword id="KW-1244">Viral short tail ejection system</keyword>
<keyword id="KW-0946">Virion</keyword>
<keyword id="KW-1160">Virus entry into host cell</keyword>
<organismHost>
    <name type="scientific">Escherichia coli</name>
    <dbReference type="NCBI Taxonomy" id="562"/>
</organismHost>
<comment type="function">
    <text evidence="1 7 8">Forms the portal vertex of the capsid. This portal plays critical roles in head assembly, genome packaging, neck/tail attachment, and genome ejection. The portal protein multimerizes as a single ring-shaped homododecamer arranged around a central channel.</text>
</comment>
<comment type="subunit">
    <text evidence="1 2 3 4 5">Homododecamer. Interacts with major capsid protein. Interacts with the tail tube protein gp11. Interacts with the terminase large subunit. Interacts with the internal virion protein gp14.</text>
</comment>
<comment type="subcellular location">
    <subcellularLocation>
        <location evidence="1 5">Virion</location>
    </subcellularLocation>
</comment>
<comment type="similarity">
    <text evidence="1">Belongs to the podoviridae portal protein family.</text>
</comment>
<feature type="chain" id="PRO_0000106517" description="Portal protein">
    <location>
        <begin position="1"/>
        <end position="536"/>
    </location>
</feature>
<feature type="helix" evidence="9">
    <location>
        <begin position="7"/>
        <end position="9"/>
    </location>
</feature>
<feature type="helix" evidence="11">
    <location>
        <begin position="13"/>
        <end position="37"/>
    </location>
</feature>
<feature type="helix" evidence="11">
    <location>
        <begin position="40"/>
        <end position="42"/>
    </location>
</feature>
<feature type="helix" evidence="11">
    <location>
        <begin position="62"/>
        <end position="76"/>
    </location>
</feature>
<feature type="strand" evidence="9">
    <location>
        <begin position="85"/>
        <end position="87"/>
    </location>
</feature>
<feature type="strand" evidence="11">
    <location>
        <begin position="92"/>
        <end position="94"/>
    </location>
</feature>
<feature type="turn" evidence="9">
    <location>
        <begin position="96"/>
        <end position="98"/>
    </location>
</feature>
<feature type="helix" evidence="11">
    <location>
        <begin position="100"/>
        <end position="123"/>
    </location>
</feature>
<feature type="helix" evidence="11">
    <location>
        <begin position="126"/>
        <end position="139"/>
    </location>
</feature>
<feature type="strand" evidence="11">
    <location>
        <begin position="143"/>
        <end position="146"/>
    </location>
</feature>
<feature type="strand" evidence="9">
    <location>
        <begin position="152"/>
        <end position="154"/>
    </location>
</feature>
<feature type="strand" evidence="11">
    <location>
        <begin position="159"/>
        <end position="161"/>
    </location>
</feature>
<feature type="helix" evidence="11">
    <location>
        <begin position="163"/>
        <end position="165"/>
    </location>
</feature>
<feature type="strand" evidence="9">
    <location>
        <begin position="168"/>
        <end position="170"/>
    </location>
</feature>
<feature type="strand" evidence="11">
    <location>
        <begin position="172"/>
        <end position="174"/>
    </location>
</feature>
<feature type="strand" evidence="11">
    <location>
        <begin position="178"/>
        <end position="186"/>
    </location>
</feature>
<feature type="helix" evidence="9">
    <location>
        <begin position="187"/>
        <end position="189"/>
    </location>
</feature>
<feature type="helix" evidence="11">
    <location>
        <begin position="192"/>
        <end position="201"/>
    </location>
</feature>
<feature type="strand" evidence="11">
    <location>
        <begin position="207"/>
        <end position="219"/>
    </location>
</feature>
<feature type="turn" evidence="11">
    <location>
        <begin position="221"/>
        <end position="223"/>
    </location>
</feature>
<feature type="strand" evidence="11">
    <location>
        <begin position="226"/>
        <end position="236"/>
    </location>
</feature>
<feature type="strand" evidence="9">
    <location>
        <begin position="242"/>
        <end position="245"/>
    </location>
</feature>
<feature type="strand" evidence="11">
    <location>
        <begin position="246"/>
        <end position="248"/>
    </location>
</feature>
<feature type="strand" evidence="9">
    <location>
        <begin position="250"/>
        <end position="257"/>
    </location>
</feature>
<feature type="strand" evidence="11">
    <location>
        <begin position="260"/>
        <end position="264"/>
    </location>
</feature>
<feature type="helix" evidence="11">
    <location>
        <begin position="268"/>
        <end position="270"/>
    </location>
</feature>
<feature type="helix" evidence="11">
    <location>
        <begin position="273"/>
        <end position="294"/>
    </location>
</feature>
<feature type="strand" evidence="11">
    <location>
        <begin position="298"/>
        <end position="300"/>
    </location>
</feature>
<feature type="helix" evidence="11">
    <location>
        <begin position="308"/>
        <end position="312"/>
    </location>
</feature>
<feature type="strand" evidence="11">
    <location>
        <begin position="316"/>
        <end position="321"/>
    </location>
</feature>
<feature type="helix" evidence="11">
    <location>
        <begin position="324"/>
        <end position="326"/>
    </location>
</feature>
<feature type="strand" evidence="11">
    <location>
        <begin position="327"/>
        <end position="329"/>
    </location>
</feature>
<feature type="helix" evidence="11">
    <location>
        <begin position="336"/>
        <end position="355"/>
    </location>
</feature>
<feature type="turn" evidence="11">
    <location>
        <begin position="356"/>
        <end position="359"/>
    </location>
</feature>
<feature type="strand" evidence="9">
    <location>
        <begin position="365"/>
        <end position="367"/>
    </location>
</feature>
<feature type="turn" evidence="11">
    <location>
        <begin position="376"/>
        <end position="382"/>
    </location>
</feature>
<feature type="strand" evidence="11">
    <location>
        <begin position="383"/>
        <end position="387"/>
    </location>
</feature>
<feature type="turn" evidence="11">
    <location>
        <begin position="389"/>
        <end position="391"/>
    </location>
</feature>
<feature type="turn" evidence="11">
    <location>
        <begin position="393"/>
        <end position="396"/>
    </location>
</feature>
<feature type="helix" evidence="11">
    <location>
        <begin position="397"/>
        <end position="410"/>
    </location>
</feature>
<feature type="turn" evidence="11">
    <location>
        <begin position="411"/>
        <end position="413"/>
    </location>
</feature>
<feature type="helix" evidence="9">
    <location>
        <begin position="419"/>
        <end position="421"/>
    </location>
</feature>
<feature type="strand" evidence="9">
    <location>
        <begin position="425"/>
        <end position="427"/>
    </location>
</feature>
<feature type="helix" evidence="11">
    <location>
        <begin position="429"/>
        <end position="432"/>
    </location>
</feature>
<feature type="helix" evidence="11">
    <location>
        <begin position="439"/>
        <end position="450"/>
    </location>
</feature>
<feature type="turn" evidence="11">
    <location>
        <begin position="454"/>
        <end position="457"/>
    </location>
</feature>
<feature type="strand" evidence="10">
    <location>
        <begin position="459"/>
        <end position="461"/>
    </location>
</feature>
<feature type="helix" evidence="11">
    <location>
        <begin position="463"/>
        <end position="474"/>
    </location>
</feature>
<feature type="turn" evidence="11">
    <location>
        <begin position="479"/>
        <end position="481"/>
    </location>
</feature>
<feature type="helix" evidence="11">
    <location>
        <begin position="485"/>
        <end position="495"/>
    </location>
</feature>
<feature type="strand" evidence="10">
    <location>
        <begin position="517"/>
        <end position="519"/>
    </location>
</feature>
<feature type="helix" evidence="10">
    <location>
        <begin position="520"/>
        <end position="530"/>
    </location>
</feature>
<gene>
    <name type="ordered locus">8</name>
</gene>
<dbReference type="EMBL" id="V01146">
    <property type="protein sequence ID" value="CAA24425.1"/>
    <property type="molecule type" value="Genomic_DNA"/>
</dbReference>
<dbReference type="PIR" id="A04354">
    <property type="entry name" value="JQBPT7"/>
</dbReference>
<dbReference type="RefSeq" id="NP_041995.1">
    <property type="nucleotide sequence ID" value="NC_001604.1"/>
</dbReference>
<dbReference type="PDB" id="3J4A">
    <property type="method" value="EM"/>
    <property type="resolution" value="12.00 A"/>
    <property type="chains" value="A/B/C/D/E/F/G/H/I/J/K/L=1-497"/>
</dbReference>
<dbReference type="PDB" id="6QWP">
    <property type="method" value="X-ray"/>
    <property type="resolution" value="3.40 A"/>
    <property type="chains" value="A/B/C/D/E/F/G/H/I/J/K/L/M=1-536"/>
</dbReference>
<dbReference type="PDB" id="6QX5">
    <property type="method" value="X-ray"/>
    <property type="resolution" value="3.60 A"/>
    <property type="chains" value="A/B/C/D/E/F/G/H/I/J/K/L=5-494"/>
</dbReference>
<dbReference type="PDB" id="6QXM">
    <property type="method" value="EM"/>
    <property type="resolution" value="4.10 A"/>
    <property type="chains" value="A/B/C/D/E/F/G/H/I/J/K/L=1-536"/>
</dbReference>
<dbReference type="PDB" id="6R21">
    <property type="method" value="EM"/>
    <property type="resolution" value="3.33 A"/>
    <property type="chains" value="A/B/C/D/E/F/G/H/I/J/K/L=1-536"/>
</dbReference>
<dbReference type="PDB" id="6TJP">
    <property type="method" value="X-ray"/>
    <property type="resolution" value="3.74 A"/>
    <property type="chains" value="A/B/C/D/E/F/G/H/I/J/K/L/M=1-536"/>
</dbReference>
<dbReference type="PDB" id="7BOU">
    <property type="method" value="EM"/>
    <property type="resolution" value="3.60 A"/>
    <property type="chains" value="A/B/C/D/E/F/G/H/I/J/K/L=1-536"/>
</dbReference>
<dbReference type="PDB" id="7BP0">
    <property type="method" value="EM"/>
    <property type="resolution" value="4.60 A"/>
    <property type="chains" value="a/b/c/d/e/f/g/h/i/j/k/l=1-536"/>
</dbReference>
<dbReference type="PDB" id="7EY6">
    <property type="method" value="EM"/>
    <property type="resolution" value="4.30 A"/>
    <property type="chains" value="A/B/C/D/E/F/G/H/I/J/K/L=1-536"/>
</dbReference>
<dbReference type="PDB" id="7EY8">
    <property type="method" value="EM"/>
    <property type="resolution" value="3.40 A"/>
    <property type="chains" value="A/B/C/D/E/F/G/H/I/J/K/L=1-536"/>
</dbReference>
<dbReference type="PDB" id="8E4G">
    <property type="method" value="EM"/>
    <property type="resolution" value="3.20 A"/>
    <property type="chains" value="r/u=1-496"/>
</dbReference>
<dbReference type="PDB" id="9JYZ">
    <property type="method" value="EM"/>
    <property type="resolution" value="2.70 A"/>
    <property type="chains" value="j/k/l/m/n/o/p/q/r/s/t/u=1-536"/>
</dbReference>
<dbReference type="PDB" id="9JZ0">
    <property type="method" value="EM"/>
    <property type="resolution" value="3.50 A"/>
    <property type="chains" value="A/B/C/D/E/F/G/H/I/J/K/L=1-536"/>
</dbReference>
<dbReference type="PDBsum" id="3J4A"/>
<dbReference type="PDBsum" id="6QWP"/>
<dbReference type="PDBsum" id="6QX5"/>
<dbReference type="PDBsum" id="6QXM"/>
<dbReference type="PDBsum" id="6R21"/>
<dbReference type="PDBsum" id="6TJP"/>
<dbReference type="PDBsum" id="7BOU"/>
<dbReference type="PDBsum" id="7BP0"/>
<dbReference type="PDBsum" id="7EY6"/>
<dbReference type="PDBsum" id="7EY8"/>
<dbReference type="PDBsum" id="8E4G"/>
<dbReference type="PDBsum" id="9JYZ"/>
<dbReference type="PDBsum" id="9JZ0"/>
<dbReference type="EMDB" id="EMD-2356"/>
<dbReference type="EMDB" id="EMD-30134"/>
<dbReference type="EMDB" id="EMD-30138"/>
<dbReference type="EMDB" id="EMD-4669"/>
<dbReference type="EMDB" id="EMD-4706"/>
<dbReference type="EMDB" id="EMD-5566"/>
<dbReference type="EMDB" id="EMD-5567"/>
<dbReference type="EMDB" id="EMD-5568"/>
<dbReference type="EMDB" id="EMD-5569"/>
<dbReference type="EMDB" id="EMD-5570"/>
<dbReference type="EMDB" id="EMD-5571"/>
<dbReference type="EMDB" id="EMD-5572"/>
<dbReference type="EMDB" id="EMD-5573"/>
<dbReference type="EMDB" id="EMD-5690"/>
<dbReference type="EMDB" id="EMD-61910"/>
<dbReference type="EMDB" id="EMD-61911"/>
<dbReference type="SMR" id="P03728"/>
<dbReference type="MINT" id="P03728"/>
<dbReference type="TCDB" id="1.W.10.1.1">
    <property type="family name" value="the (enterobacterial phage t7) portal protein 10 (ppp10) family"/>
</dbReference>
<dbReference type="KEGG" id="vg:1261033"/>
<dbReference type="OrthoDB" id="5112at10239"/>
<dbReference type="EvolutionaryTrace" id="P03728"/>
<dbReference type="Proteomes" id="UP000000840">
    <property type="component" value="Genome"/>
</dbReference>
<dbReference type="GO" id="GO:0046798">
    <property type="term" value="C:viral portal complex"/>
    <property type="evidence" value="ECO:0000314"/>
    <property type="project" value="UniProtKB"/>
</dbReference>
<dbReference type="GO" id="GO:0099002">
    <property type="term" value="P:symbiont genome ejection through host cell envelope, short tail mechanism"/>
    <property type="evidence" value="ECO:0007669"/>
    <property type="project" value="UniProtKB-UniRule"/>
</dbReference>
<dbReference type="GO" id="GO:0019073">
    <property type="term" value="P:viral DNA genome packaging"/>
    <property type="evidence" value="ECO:0000314"/>
    <property type="project" value="UniProtKB"/>
</dbReference>
<dbReference type="HAMAP" id="MF_04120">
    <property type="entry name" value="PORTAL_PROTEIN_T7"/>
    <property type="match status" value="1"/>
</dbReference>
<dbReference type="InterPro" id="IPR020991">
    <property type="entry name" value="Connector_podovirus"/>
</dbReference>
<dbReference type="InterPro" id="IPR038995">
    <property type="entry name" value="Portal_prot_Caudovirale"/>
</dbReference>
<dbReference type="Pfam" id="PF12236">
    <property type="entry name" value="Head-tail_con"/>
    <property type="match status" value="1"/>
</dbReference>
<name>PORTL_BPT7</name>
<sequence length="536" mass="59120">MAEKRTGLAEDGAKSVYERLKNDRAPYETRAQNCAQYTIPSLFPKDSDNASTDYQTPWQAVGARGLNNLASKLMLALFPMQTWMRLTISEYEAKQLLSDPDGLAKVDEGLSMVERIIMNYIESNSYRVTLFEALKQLVVAGNVLLYLPEPEGSNYNPMKLYRLSSYVVQRDAFGNVLQMVTRDQIAFGALPEDIRKAVEGQGGEKKADETIDVYTHIYLDEDSGEYLRYEEVEGMEVQGSDGTYPKEACPYIPIRMVRLDGESYGRSYIEEYLGDLRSLENLQEAIVKMSMISSKVIGLVNPAGITQPRRLTKAQTGDFVTGRPEDISFLQLEKQADFTVAKAVSDAIEARLSFAFMLNSAVQRTGERVTAEEIRYVASELEDTLGGVYSILSQELQLPLVRVLLKQLQATQQIPELPKEAVEPTISTGLEAIGRGQDLDKLERCVTAWAALAPMRDDPDINLAMIKLRIANAIGIDTSGILLTEEQKQQKMAQQSMQMGMDNGAAALAQGMAAQATASPEAMAAAADSVGLQPGI</sequence>
<evidence type="ECO:0000255" key="1">
    <source>
        <dbReference type="HAMAP-Rule" id="MF_04120"/>
    </source>
</evidence>
<evidence type="ECO:0000269" key="2">
    <source>
    </source>
</evidence>
<evidence type="ECO:0000269" key="3">
    <source>
    </source>
</evidence>
<evidence type="ECO:0000269" key="4">
    <source>
    </source>
</evidence>
<evidence type="ECO:0000269" key="5">
    <source>
    </source>
</evidence>
<evidence type="ECO:0000305" key="6"/>
<evidence type="ECO:0000305" key="7">
    <source>
    </source>
</evidence>
<evidence type="ECO:0000305" key="8">
    <source>
    </source>
</evidence>
<evidence type="ECO:0007829" key="9">
    <source>
        <dbReference type="PDB" id="6QWP"/>
    </source>
</evidence>
<evidence type="ECO:0007829" key="10">
    <source>
        <dbReference type="PDB" id="7EY8"/>
    </source>
</evidence>
<evidence type="ECO:0007829" key="11">
    <source>
        <dbReference type="PDB" id="8E4G"/>
    </source>
</evidence>
<protein>
    <recommendedName>
        <fullName evidence="1 6">Portal protein</fullName>
    </recommendedName>
    <alternativeName>
        <fullName evidence="6">Gene product 8</fullName>
        <shortName>Gp8</shortName>
    </alternativeName>
    <alternativeName>
        <fullName evidence="1 6">Head-to-tail connector</fullName>
    </alternativeName>
</protein>
<proteinExistence type="evidence at protein level"/>